<protein>
    <recommendedName>
        <fullName>Protein unc-87</fullName>
    </recommendedName>
    <alternativeName>
        <fullName>Uncoordinated protein 87</fullName>
    </alternativeName>
</protein>
<name>UNC87_CAEEL</name>
<proteinExistence type="evidence at protein level"/>
<dbReference type="EMBL" id="U04711">
    <property type="protein sequence ID" value="AAA81899.1"/>
    <property type="molecule type" value="mRNA"/>
</dbReference>
<dbReference type="EMBL" id="U04711">
    <property type="protein sequence ID" value="AAA81900.1"/>
    <property type="status" value="ALT_INIT"/>
    <property type="molecule type" value="mRNA"/>
</dbReference>
<dbReference type="EMBL" id="U04712">
    <property type="protein sequence ID" value="AAA81901.1"/>
    <property type="molecule type" value="Genomic_DNA"/>
</dbReference>
<dbReference type="EMBL" id="U04712">
    <property type="protein sequence ID" value="AAA81902.1"/>
    <property type="molecule type" value="Genomic_DNA"/>
</dbReference>
<dbReference type="EMBL" id="FO080807">
    <property type="protein sequence ID" value="CCD66936.1"/>
    <property type="molecule type" value="Genomic_DNA"/>
</dbReference>
<dbReference type="EMBL" id="FO080807">
    <property type="protein sequence ID" value="CCD66937.1"/>
    <property type="molecule type" value="Genomic_DNA"/>
</dbReference>
<dbReference type="EMBL" id="FO080807">
    <property type="protein sequence ID" value="CCD66938.1"/>
    <property type="molecule type" value="Genomic_DNA"/>
</dbReference>
<dbReference type="PIR" id="B54800">
    <property type="entry name" value="B54800"/>
</dbReference>
<dbReference type="PIR" id="T33851">
    <property type="entry name" value="T33851"/>
</dbReference>
<dbReference type="RefSeq" id="NP_001021092.1">
    <molecule id="P37806-1"/>
    <property type="nucleotide sequence ID" value="NM_001025921.5"/>
</dbReference>
<dbReference type="RefSeq" id="NP_001021093.1">
    <molecule id="P37806-2"/>
    <property type="nucleotide sequence ID" value="NM_001025922.6"/>
</dbReference>
<dbReference type="BioGRID" id="37845">
    <property type="interactions" value="12"/>
</dbReference>
<dbReference type="FunCoup" id="P37806">
    <property type="interactions" value="30"/>
</dbReference>
<dbReference type="IntAct" id="P37806">
    <property type="interactions" value="5"/>
</dbReference>
<dbReference type="MINT" id="P37806"/>
<dbReference type="STRING" id="6239.F08B6.4a.2"/>
<dbReference type="iPTMnet" id="P37806"/>
<dbReference type="PaxDb" id="6239-F08B6.4a.1"/>
<dbReference type="PeptideAtlas" id="P37806"/>
<dbReference type="EnsemblMetazoa" id="F08B6.4a.1">
    <molecule id="P37806-1"/>
    <property type="protein sequence ID" value="F08B6.4a.1"/>
    <property type="gene ID" value="WBGene00006819"/>
</dbReference>
<dbReference type="EnsemblMetazoa" id="F08B6.4b.1">
    <molecule id="P37806-2"/>
    <property type="protein sequence ID" value="F08B6.4b.1"/>
    <property type="gene ID" value="WBGene00006819"/>
</dbReference>
<dbReference type="GeneID" id="172397"/>
<dbReference type="KEGG" id="cel:CELE_F08B6.4"/>
<dbReference type="UCSC" id="F08B6.4c.1">
    <molecule id="P37806-1"/>
    <property type="organism name" value="c. elegans"/>
</dbReference>
<dbReference type="AGR" id="WB:WBGene00006819"/>
<dbReference type="CTD" id="172397"/>
<dbReference type="WormBase" id="F08B6.4a">
    <molecule id="P37806-1"/>
    <property type="protein sequence ID" value="CE20658"/>
    <property type="gene ID" value="WBGene00006819"/>
    <property type="gene designation" value="unc-87"/>
</dbReference>
<dbReference type="WormBase" id="F08B6.4b">
    <molecule id="P37806-2"/>
    <property type="protein sequence ID" value="CE27922"/>
    <property type="gene ID" value="WBGene00006819"/>
    <property type="gene designation" value="unc-87"/>
</dbReference>
<dbReference type="eggNOG" id="ENOG502QR8I">
    <property type="taxonomic scope" value="Eukaryota"/>
</dbReference>
<dbReference type="InParanoid" id="P37806"/>
<dbReference type="OMA" id="CRNTTYE"/>
<dbReference type="OrthoDB" id="21595at2759"/>
<dbReference type="PhylomeDB" id="P37806"/>
<dbReference type="SignaLink" id="P37806"/>
<dbReference type="PRO" id="PR:P37806"/>
<dbReference type="Proteomes" id="UP000001940">
    <property type="component" value="Chromosome I"/>
</dbReference>
<dbReference type="Bgee" id="WBGene00006819">
    <property type="expression patterns" value="Expressed in larva and 4 other cell types or tissues"/>
</dbReference>
<dbReference type="GO" id="GO:0015629">
    <property type="term" value="C:actin cytoskeleton"/>
    <property type="evidence" value="ECO:0000318"/>
    <property type="project" value="GO_Central"/>
</dbReference>
<dbReference type="GO" id="GO:0042642">
    <property type="term" value="C:actomyosin, myosin complex part"/>
    <property type="evidence" value="ECO:0000314"/>
    <property type="project" value="WormBase"/>
</dbReference>
<dbReference type="GO" id="GO:0031674">
    <property type="term" value="C:I band"/>
    <property type="evidence" value="ECO:0000314"/>
    <property type="project" value="WormBase"/>
</dbReference>
<dbReference type="GO" id="GO:0001725">
    <property type="term" value="C:stress fiber"/>
    <property type="evidence" value="ECO:0000314"/>
    <property type="project" value="WormBase"/>
</dbReference>
<dbReference type="GO" id="GO:0005865">
    <property type="term" value="C:striated muscle thin filament"/>
    <property type="evidence" value="ECO:0000314"/>
    <property type="project" value="WormBase"/>
</dbReference>
<dbReference type="GO" id="GO:0051015">
    <property type="term" value="F:actin filament binding"/>
    <property type="evidence" value="ECO:0000314"/>
    <property type="project" value="WormBase"/>
</dbReference>
<dbReference type="GO" id="GO:0140661">
    <property type="term" value="F:cytoskeletal motor inhibitor activity"/>
    <property type="evidence" value="ECO:0000314"/>
    <property type="project" value="WormBase"/>
</dbReference>
<dbReference type="GO" id="GO:0017022">
    <property type="term" value="F:myosin binding"/>
    <property type="evidence" value="ECO:0000314"/>
    <property type="project" value="WormBase"/>
</dbReference>
<dbReference type="GO" id="GO:0051017">
    <property type="term" value="P:actin filament bundle assembly"/>
    <property type="evidence" value="ECO:0000314"/>
    <property type="project" value="WormBase"/>
</dbReference>
<dbReference type="GO" id="GO:0007015">
    <property type="term" value="P:actin filament organization"/>
    <property type="evidence" value="ECO:0000318"/>
    <property type="project" value="GO_Central"/>
</dbReference>
<dbReference type="GO" id="GO:0031032">
    <property type="term" value="P:actomyosin structure organization"/>
    <property type="evidence" value="ECO:0000314"/>
    <property type="project" value="WormBase"/>
</dbReference>
<dbReference type="GO" id="GO:0031034">
    <property type="term" value="P:myosin filament assembly"/>
    <property type="evidence" value="ECO:0000314"/>
    <property type="project" value="WormBase"/>
</dbReference>
<dbReference type="GO" id="GO:1904113">
    <property type="term" value="P:negative regulation of muscle filament sliding"/>
    <property type="evidence" value="ECO:0000314"/>
    <property type="project" value="WormBase"/>
</dbReference>
<dbReference type="InterPro" id="IPR050606">
    <property type="entry name" value="Calponin-like"/>
</dbReference>
<dbReference type="InterPro" id="IPR000557">
    <property type="entry name" value="Calponin_repeat"/>
</dbReference>
<dbReference type="PANTHER" id="PTHR47385">
    <property type="entry name" value="CALPONIN"/>
    <property type="match status" value="1"/>
</dbReference>
<dbReference type="PANTHER" id="PTHR47385:SF11">
    <property type="entry name" value="PROTEIN UNC-87"/>
    <property type="match status" value="1"/>
</dbReference>
<dbReference type="Pfam" id="PF00402">
    <property type="entry name" value="Calponin"/>
    <property type="match status" value="6"/>
</dbReference>
<dbReference type="PROSITE" id="PS01052">
    <property type="entry name" value="CALPONIN_1"/>
    <property type="match status" value="5"/>
</dbReference>
<dbReference type="PROSITE" id="PS51122">
    <property type="entry name" value="CALPONIN_2"/>
    <property type="match status" value="7"/>
</dbReference>
<evidence type="ECO:0000255" key="1">
    <source>
        <dbReference type="PROSITE-ProRule" id="PRU00474"/>
    </source>
</evidence>
<evidence type="ECO:0000256" key="2">
    <source>
        <dbReference type="SAM" id="MobiDB-lite"/>
    </source>
</evidence>
<evidence type="ECO:0000269" key="3">
    <source>
    </source>
</evidence>
<evidence type="ECO:0000269" key="4">
    <source>
    </source>
</evidence>
<evidence type="ECO:0000269" key="5">
    <source>
    </source>
</evidence>
<evidence type="ECO:0000269" key="6">
    <source>
    </source>
</evidence>
<evidence type="ECO:0000269" key="7">
    <source>
    </source>
</evidence>
<evidence type="ECO:0000305" key="8"/>
<reference key="1">
    <citation type="journal article" date="1994" name="J. Cell Biol.">
        <title>The Caenorhabditis elegans muscle-affecting gene unc-87 encodes a novel thin filament-associated protein.</title>
        <authorList>
            <person name="Goetinck S.D."/>
            <person name="Waterston R.H."/>
        </authorList>
    </citation>
    <scope>NUCLEOTIDE SEQUENCE [GENOMIC DNA / MRNA]</scope>
    <scope>FUNCTION</scope>
    <scope>ALTERNATIVE SPLICING (ISOFORMS A AND B)</scope>
    <scope>DISRUPTION PHENOTYPE</scope>
    <source>
        <strain>Bristol N2</strain>
    </source>
</reference>
<reference key="2">
    <citation type="journal article" date="1998" name="Science">
        <title>Genome sequence of the nematode C. elegans: a platform for investigating biology.</title>
        <authorList>
            <consortium name="The C. elegans sequencing consortium"/>
        </authorList>
    </citation>
    <scope>NUCLEOTIDE SEQUENCE [LARGE SCALE GENOMIC DNA]</scope>
    <scope>ALTERNATIVE SPLICING</scope>
    <source>
        <strain>Bristol N2</strain>
    </source>
</reference>
<reference key="3">
    <citation type="journal article" date="1994" name="J. Cell Biol.">
        <title>The Caenorhabditis elegans UNC-87 protein is essential for maintenance, but not assembly, of bodywall muscle.</title>
        <authorList>
            <person name="Goetinck S."/>
            <person name="Waterston R.H."/>
        </authorList>
    </citation>
    <scope>FUNCTION</scope>
    <scope>DISRUPTION PHENOTYPE</scope>
    <scope>MUTAGENESIS OF ALA-207</scope>
</reference>
<reference key="4">
    <citation type="journal article" date="2001" name="J. Biol. Chem.">
        <title>UNC-87 is an actin-bundling protein.</title>
        <authorList>
            <person name="Kranewitter W.J."/>
            <person name="Ylanne J."/>
            <person name="Gimona M."/>
        </authorList>
    </citation>
    <scope>FUNCTION</scope>
    <scope>SUBUNIT</scope>
    <scope>INTERACTION WITH F-ACTIN</scope>
    <scope>DOMAIN</scope>
</reference>
<reference key="5">
    <citation type="journal article" date="2007" name="J. Cell Sci.">
        <title>UNC-87, a calponin-related protein in C. elegans, antagonizes ADF/cofilin-mediated actin filament dynamics.</title>
        <authorList>
            <person name="Yamashiro S."/>
            <person name="Gimona M."/>
            <person name="Ono S."/>
        </authorList>
    </citation>
    <scope>FUNCTION</scope>
    <scope>SUBCELLULAR LOCATION</scope>
    <scope>TISSUE SPECIFICITY</scope>
    <scope>MUTAGENESIS OF ALA-207</scope>
</reference>
<reference key="6">
    <citation type="journal article" date="2015" name="Mol. Biol. Cell">
        <title>UNC-87 isoforms, Caenorhabditis elegans calponin-related proteins, interact with both actin and myosin and regulate actomyosin contractility.</title>
        <authorList>
            <person name="Ono K."/>
            <person name="Obinata T."/>
            <person name="Yamashiro S."/>
            <person name="Liu Z."/>
            <person name="Ono S."/>
        </authorList>
    </citation>
    <scope>FUNCTION</scope>
    <scope>INTERACTION WITH MYOSIN AND F-ACTIN</scope>
    <scope>SUBCELLULAR LOCATION</scope>
    <scope>TISSUE SPECIFICITY</scope>
    <scope>DISRUPTION PHENOTYPE</scope>
</reference>
<feature type="chain" id="PRO_0000204792" description="Protein unc-87">
    <location>
        <begin position="1"/>
        <end position="565"/>
    </location>
</feature>
<feature type="repeat" description="Calponin-like 1" evidence="1">
    <location>
        <begin position="237"/>
        <end position="262"/>
    </location>
</feature>
<feature type="repeat" description="Calponin-like 2" evidence="1">
    <location>
        <begin position="285"/>
        <end position="310"/>
    </location>
</feature>
<feature type="repeat" description="Calponin-like 3" evidence="1">
    <location>
        <begin position="338"/>
        <end position="363"/>
    </location>
</feature>
<feature type="repeat" description="Calponin-like 4" evidence="1">
    <location>
        <begin position="384"/>
        <end position="409"/>
    </location>
</feature>
<feature type="repeat" description="Calponin-like 5" evidence="1">
    <location>
        <begin position="431"/>
        <end position="456"/>
    </location>
</feature>
<feature type="repeat" description="Calponin-like 6" evidence="1">
    <location>
        <begin position="472"/>
        <end position="497"/>
    </location>
</feature>
<feature type="repeat" description="Calponin-like 7" evidence="1">
    <location>
        <begin position="517"/>
        <end position="542"/>
    </location>
</feature>
<feature type="region of interest" description="Disordered" evidence="2">
    <location>
        <begin position="1"/>
        <end position="83"/>
    </location>
</feature>
<feature type="region of interest" description="Disordered" evidence="2">
    <location>
        <begin position="237"/>
        <end position="262"/>
    </location>
</feature>
<feature type="region of interest" description="Disordered" evidence="2">
    <location>
        <begin position="369"/>
        <end position="400"/>
    </location>
</feature>
<feature type="compositionally biased region" description="Low complexity" evidence="2">
    <location>
        <begin position="1"/>
        <end position="27"/>
    </location>
</feature>
<feature type="compositionally biased region" description="Basic and acidic residues" evidence="2">
    <location>
        <begin position="54"/>
        <end position="69"/>
    </location>
</feature>
<feature type="compositionally biased region" description="Polar residues" evidence="2">
    <location>
        <begin position="250"/>
        <end position="262"/>
    </location>
</feature>
<feature type="compositionally biased region" description="Basic and acidic residues" evidence="2">
    <location>
        <begin position="369"/>
        <end position="381"/>
    </location>
</feature>
<feature type="compositionally biased region" description="Polar residues" evidence="2">
    <location>
        <begin position="384"/>
        <end position="398"/>
    </location>
</feature>
<feature type="splice variant" id="VSP_020109" description="In isoform c." evidence="8">
    <location>
        <begin position="1"/>
        <end position="21"/>
    </location>
</feature>
<feature type="splice variant" id="VSP_000757" description="In isoform b." evidence="8">
    <original>MLSFNNTTSA</original>
    <variation>MPPTEDQVVA</variation>
    <location>
        <begin position="1"/>
        <end position="10"/>
    </location>
</feature>
<feature type="splice variant" id="VSP_020110" description="In isoform b." evidence="8">
    <location>
        <begin position="11"/>
        <end position="201"/>
    </location>
</feature>
<feature type="mutagenesis site" description="In e1459; Disruption of myofilament periodicity and thin filament accumulation at the end of muscle cells." evidence="4 6">
    <original>A</original>
    <variation>V</variation>
    <location>
        <position position="207"/>
    </location>
</feature>
<organism>
    <name type="scientific">Caenorhabditis elegans</name>
    <dbReference type="NCBI Taxonomy" id="6239"/>
    <lineage>
        <taxon>Eukaryota</taxon>
        <taxon>Metazoa</taxon>
        <taxon>Ecdysozoa</taxon>
        <taxon>Nematoda</taxon>
        <taxon>Chromadorea</taxon>
        <taxon>Rhabditida</taxon>
        <taxon>Rhabditina</taxon>
        <taxon>Rhabditomorpha</taxon>
        <taxon>Rhabditoidea</taxon>
        <taxon>Rhabditidae</taxon>
        <taxon>Peloderinae</taxon>
        <taxon>Caenorhabditis</taxon>
    </lineage>
</organism>
<accession>P37806</accession>
<accession>Q6EZG6</accession>
<accession>Q9TYS6</accession>
<gene>
    <name type="primary">unc-87</name>
    <name type="ORF">F08B6.4</name>
</gene>
<comment type="function">
    <text evidence="3 4 5 6 7">Thin filament-associated protein that is implicated in actin bundling and actin filament dynamics (PubMed:11096113, PubMed:17684058, PubMed:25717181, PubMed:7929572, PubMed:7929573). Exhibits F-actin cross-linking activity (PubMed:11096113, PubMed:17684058). Required for the maintenance of sarcomeric actin organization in striated muscles (PubMed:7929572, PubMed:7929573). Competes with unc-60 isoform b for actin binding and protects actin filaments from depolymerization by unc-60, thereby contributing to actin filament stability (PubMed:17684058). Cooperates with myosin to form actomyosin bundles and inhibits actomyosin ATPase activity and actomyosin motility (PubMed:25717181). Might protect the myofilaments from mechanical stress (PubMed:7929572).</text>
</comment>
<comment type="function">
    <molecule>Isoform b</molecule>
    <text evidence="5">Acts as a negative regulator of myosin-dependent contractility of smooth muscle-like cells in the somatic gonad.</text>
</comment>
<comment type="subunit">
    <text evidence="3 5">Monomer (PubMed:11096113). Interacts with F-actin (PubMed:11096113, PubMed:25717181). Interacts with myosin (PubMed:25717181).</text>
</comment>
<comment type="interaction">
    <interactant intactId="EBI-319806">
        <id>P37806</id>
    </interactant>
    <interactant intactId="EBI-311986">
        <id>G5EGG0</id>
        <label>uso-1</label>
    </interactant>
    <organismsDiffer>false</organismsDiffer>
    <experiments>3</experiments>
</comment>
<comment type="subcellular location">
    <subcellularLocation>
        <location evidence="4 5">Cytoplasm</location>
        <location evidence="4 5">Myofibril</location>
        <location evidence="4 5">Sarcomere</location>
        <location evidence="4 5">I band</location>
    </subcellularLocation>
    <text evidence="4 5">Absent from the distal edges of the thin filament. Isoform b: Partially overlaps with the region where myo-3 is located.</text>
</comment>
<comment type="alternative products">
    <event type="alternative splicing"/>
    <isoform>
        <id>P37806-1</id>
        <name>a</name>
        <sequence type="displayed"/>
    </isoform>
    <isoform>
        <id>P37806-2</id>
        <name>b</name>
        <sequence type="described" ref="VSP_000757 VSP_020110"/>
    </isoform>
    <isoform>
        <id>P37806-3</id>
        <name>c</name>
        <sequence type="described" ref="VSP_020109"/>
    </isoform>
</comment>
<comment type="tissue specificity">
    <text evidence="4 5">Expressed in the body wall muscles (PubMed:17684058). Isoform a: Expression in the pharynx, anal depressor muscle, uterine muscle, vulva and unidentified neurons in the head and the ventral region (PubMed:25717181). Isoform b: Expression in the body wall muscles, spermatheca, vulva and in the myoepithelial sheath (PubMed:25717181).</text>
</comment>
<comment type="domain">
    <text evidence="3">Calponin-like repeats 1-3 are required for actin binding and acting bundling activity.</text>
</comment>
<comment type="disruption phenotype">
    <text evidence="5 6 7">Defects in the structure and function of body wall muscle, resulting in variable paralysis (PubMed:7929573). Disorganization of the A- and I-bands of the myofilament lattice and accumulation of thin filaments in body wall muscles in adult animals (PubMed:7929572). More densely aligned myosin filaments indicating higher contractility of the actomyosin network (PubMed:25717181). Excessive contraction of the myoepithelial sheath (PubMed:25717181).</text>
</comment>
<comment type="similarity">
    <text evidence="8">Belongs to the calponin family.</text>
</comment>
<comment type="sequence caution" evidence="8">
    <conflict type="erroneous initiation">
        <sequence resource="EMBL-CDS" id="AAA81900"/>
    </conflict>
</comment>
<sequence>MLSFNNTTSASSFQSASSRYLMSSSSSIGPPQQQSAKLFPEHFYPSGLSPRQSEALERLRPNTASRERNIPIQFTGKNPTTNSALEEYKPVPHVQVTSPKSSIVPNFVSEQRGLQPQPTSQAPTNYRQFVAAPRSPRGYGDYPEMTGKASAAGDSEPVQIPIKTQTPITQARAQETKIPTIVSPHPVYYYDNQEQPIQQIREEQPNATMETKVTGQGQPKRVGRWTLAQLRQTDGIIPSQAGWNKGDSQKLMTNFGTPRNTNTRVKSENLQEIPEDIANRTHGEVRLQSGTNKYCSQRGMTGFGSGRDVCREGVRVAQNPADLAELPEEKIRMSEGIVRLQAGTNKYDSQKGMTGFGTGRRETTKMVDSKHPEYDHEKPDQSEIPLQSGTNKFASQKGMTGFGTARRETTKMVDSNHPDYSHECSIDQTTIPSQMGSNQYASQKGMTGFGQPRWEVLDPSISWQNRKSQGMVRLQSGTNRFASQAGMIGFGTCRNTTFEAEGGELPYEAMKVSETIIPSQAGWNKGDSQKKMTSFGAPRDVKGKHLKRIWELEYPEEAEISLDRL</sequence>
<keyword id="KW-0009">Actin-binding</keyword>
<keyword id="KW-0025">Alternative splicing</keyword>
<keyword id="KW-0963">Cytoplasm</keyword>
<keyword id="KW-0514">Muscle protein</keyword>
<keyword id="KW-1185">Reference proteome</keyword>
<keyword id="KW-0677">Repeat</keyword>